<gene>
    <name type="primary">MED24</name>
    <name type="synonym">Trap100</name>
    <name type="ORF">CG7999</name>
</gene>
<proteinExistence type="evidence at protein level"/>
<name>MED24_DROME</name>
<comment type="function">
    <text evidence="2">Component of the Mediator complex, a coactivator involved in the regulated transcription of nearly all RNA polymerase II-dependent genes. Mediator functions as a bridge to convey information from gene-specific regulatory proteins to the basal RNA polymerase II transcription machinery. Mediator is recruited to promoters by direct interactions with regulatory proteins and serves as a scaffold for the assembly of a functional preinitiation complex with RNA polymerase II and the general transcription factors. Required for activated transcription of the MtnA, MtnB and MtnD genes.</text>
</comment>
<comment type="subunit">
    <text evidence="1">Component of the Mediator complex, which includes at least CDK8, MED4, MED6, MED11, MED14, MED17, MED18, MED20, MED21, MED22, MED27, MED28, MED30 and MED31.</text>
</comment>
<comment type="subcellular location">
    <subcellularLocation>
        <location evidence="4">Nucleus</location>
    </subcellularLocation>
</comment>
<comment type="similarity">
    <text evidence="4">Belongs to the Mediator complex subunit 24 family.</text>
</comment>
<feature type="chain" id="PRO_0000305919" description="Mediator of RNA polymerase II transcription subunit 24">
    <location>
        <begin position="1"/>
        <end position="993"/>
    </location>
</feature>
<feature type="modified residue" description="Phosphoserine" evidence="3">
    <location>
        <position position="827"/>
    </location>
</feature>
<feature type="modified residue" description="Phosphoserine" evidence="3">
    <location>
        <position position="829"/>
    </location>
</feature>
<feature type="sequence conflict" description="In Ref. 4; AAM52735." evidence="4" ref="4">
    <original>P</original>
    <variation>T</variation>
    <location>
        <position position="684"/>
    </location>
</feature>
<keyword id="KW-0010">Activator</keyword>
<keyword id="KW-0539">Nucleus</keyword>
<keyword id="KW-0597">Phosphoprotein</keyword>
<keyword id="KW-1185">Reference proteome</keyword>
<keyword id="KW-0677">Repeat</keyword>
<keyword id="KW-0804">Transcription</keyword>
<keyword id="KW-0805">Transcription regulation</keyword>
<accession>Q9VSF2</accession>
<accession>Q8MQZ3</accession>
<accession>Q9GYW5</accession>
<protein>
    <recommendedName>
        <fullName>Mediator of RNA polymerase II transcription subunit 24</fullName>
    </recommendedName>
    <alternativeName>
        <fullName>Mediator complex subunit 24</fullName>
    </alternativeName>
    <alternativeName>
        <fullName>dMED24</fullName>
    </alternativeName>
    <alternativeName>
        <fullName>dTRAP100</fullName>
    </alternativeName>
</protein>
<evidence type="ECO:0000269" key="1">
    <source>
    </source>
</evidence>
<evidence type="ECO:0000269" key="2">
    <source>
    </source>
</evidence>
<evidence type="ECO:0000269" key="3">
    <source>
    </source>
</evidence>
<evidence type="ECO:0000305" key="4"/>
<sequence length="993" mass="111743">MKENNKILQLIYVAWRERWTDSQWGINIKKVLPRGVSGDVYNLADCLMQQALIGSTANPLVLNYLKHSLCAHLVSHAAVIRCIAKYDKLERVYCITALLEFLASIVDGVTCRIKSEEAVLPSSVVHLVYWLLQIFARTVQHYELYGEISAEQSYMLDQTCVVIDRLSQQQFLLSMLYVGCHEELEICGRIRDKYATIKGSLTNSNFTLNAPQVEQQLQQLAFIEAKHLEMQPLNPPSTLEKISCCVQPLLAVEVLLNPCKDTSYYVAELQMLQRLKKYSNTRLFYEIIRAGFLTLSNVADTSPDTMWGAFMFFKMPHIIKQLHALQRIPGEQPPPADYIPELVEALELLIEDNLLLDFMDTKCSCNMIEFLLNDWTKQQLVNDVHVKKFASQREAASQLLKKCDNGQQTPSNINFIKRAEVPLSGVLKTLCTNKVQDMVNVLCQVPVGNSFELILSVATVEGRLKTFVSRLIQCNENSKPVPGDLGKLCVIRSTLFDVSFLMLTSIVQTYGSDVVLSERGDSFFEKWVRECMVERNKLKNPRQILALCDDSIVDELLLSFSKPEASQLKPNNLSWQETCLNLPGVLHHVLIAWEQETLSSADVKSILDNIKRRLFSFSVCATSFLCAYMYSVKETELLKPLNMIQQFLAPLTSEELSSQENAKERLALSYQIIRKMQHDVHPAPSTKSRLISHSPLVEQFREVWRTVVDAGHLPVRAAQSLESLLLAGGAAWLSTQLVEQLLACKYTRDMSRTMDVVFAVMHLDIEKTTEALLQYVVAPLILRRQGEDINEPQSLVLARLCVYCIISCLESRKGNGTSALTAMKKRSRSHDDEELAANAAKVRKVIGDGSDNSSDFTDTTTGAGLAALLGSTSTSELRTTPLTLREPLQTSVQHIFAVFLQFVSGDELSPKAVFVYQFISLLVECGGERVAPVLRLLPNGLVQQLLKVLVTDDIKVGLISRLYDLRIQAGRLSAVSDLCLWRNMQMARHSIHL</sequence>
<organism>
    <name type="scientific">Drosophila melanogaster</name>
    <name type="common">Fruit fly</name>
    <dbReference type="NCBI Taxonomy" id="7227"/>
    <lineage>
        <taxon>Eukaryota</taxon>
        <taxon>Metazoa</taxon>
        <taxon>Ecdysozoa</taxon>
        <taxon>Arthropoda</taxon>
        <taxon>Hexapoda</taxon>
        <taxon>Insecta</taxon>
        <taxon>Pterygota</taxon>
        <taxon>Neoptera</taxon>
        <taxon>Endopterygota</taxon>
        <taxon>Diptera</taxon>
        <taxon>Brachycera</taxon>
        <taxon>Muscomorpha</taxon>
        <taxon>Ephydroidea</taxon>
        <taxon>Drosophilidae</taxon>
        <taxon>Drosophila</taxon>
        <taxon>Sophophora</taxon>
    </lineage>
</organism>
<dbReference type="EMBL" id="AF289998">
    <property type="protein sequence ID" value="AAG02463.1"/>
    <property type="molecule type" value="mRNA"/>
</dbReference>
<dbReference type="EMBL" id="AE014296">
    <property type="protein sequence ID" value="AAF50469.2"/>
    <property type="molecule type" value="Genomic_DNA"/>
</dbReference>
<dbReference type="EMBL" id="AY122223">
    <property type="protein sequence ID" value="AAM52735.1"/>
    <property type="molecule type" value="mRNA"/>
</dbReference>
<dbReference type="EMBL" id="BT025232">
    <property type="protein sequence ID" value="ABF17923.1"/>
    <property type="molecule type" value="mRNA"/>
</dbReference>
<dbReference type="RefSeq" id="NP_648185.1">
    <property type="nucleotide sequence ID" value="NM_139928.5"/>
</dbReference>
<dbReference type="SMR" id="Q9VSF2"/>
<dbReference type="BioGRID" id="64334">
    <property type="interactions" value="5"/>
</dbReference>
<dbReference type="ComplexPortal" id="CPX-2308">
    <property type="entry name" value="Core mediator complex"/>
</dbReference>
<dbReference type="FunCoup" id="Q9VSF2">
    <property type="interactions" value="920"/>
</dbReference>
<dbReference type="IntAct" id="Q9VSF2">
    <property type="interactions" value="51"/>
</dbReference>
<dbReference type="STRING" id="7227.FBpp0076417"/>
<dbReference type="iPTMnet" id="Q9VSF2"/>
<dbReference type="PaxDb" id="7227-FBpp0076417"/>
<dbReference type="DNASU" id="38914"/>
<dbReference type="EnsemblMetazoa" id="FBtr0076694">
    <property type="protein sequence ID" value="FBpp0076417"/>
    <property type="gene ID" value="FBgn0035851"/>
</dbReference>
<dbReference type="GeneID" id="38914"/>
<dbReference type="KEGG" id="dme:Dmel_CG7999"/>
<dbReference type="AGR" id="FB:FBgn0035851"/>
<dbReference type="CTD" id="9862"/>
<dbReference type="FlyBase" id="FBgn0035851">
    <property type="gene designation" value="MED24"/>
</dbReference>
<dbReference type="VEuPathDB" id="VectorBase:FBgn0035851"/>
<dbReference type="eggNOG" id="ENOG502QPJD">
    <property type="taxonomic scope" value="Eukaryota"/>
</dbReference>
<dbReference type="GeneTree" id="ENSGT00390000016438"/>
<dbReference type="HOGENOM" id="CLU_007484_0_0_1"/>
<dbReference type="InParanoid" id="Q9VSF2"/>
<dbReference type="OMA" id="RWSDSQW"/>
<dbReference type="OrthoDB" id="21216at2759"/>
<dbReference type="PhylomeDB" id="Q9VSF2"/>
<dbReference type="Reactome" id="R-DME-9841922">
    <property type="pathway name" value="MLL4 and MLL3 complexes regulate expression of PPARG target genes in adipogenesis and hepatic steatosis"/>
</dbReference>
<dbReference type="SignaLink" id="Q9VSF2"/>
<dbReference type="BioGRID-ORCS" id="38914">
    <property type="hits" value="0 hits in 1 CRISPR screen"/>
</dbReference>
<dbReference type="ChiTaRS" id="MED24">
    <property type="organism name" value="fly"/>
</dbReference>
<dbReference type="GenomeRNAi" id="38914"/>
<dbReference type="PRO" id="PR:Q9VSF2"/>
<dbReference type="Proteomes" id="UP000000803">
    <property type="component" value="Chromosome 3L"/>
</dbReference>
<dbReference type="Bgee" id="FBgn0035851">
    <property type="expression patterns" value="Expressed in oviduct (Drosophila) and 31 other cell types or tissues"/>
</dbReference>
<dbReference type="GO" id="GO:0016592">
    <property type="term" value="C:mediator complex"/>
    <property type="evidence" value="ECO:0000314"/>
    <property type="project" value="UniProtKB"/>
</dbReference>
<dbReference type="GO" id="GO:0005634">
    <property type="term" value="C:nucleus"/>
    <property type="evidence" value="ECO:0000250"/>
    <property type="project" value="FlyBase"/>
</dbReference>
<dbReference type="GO" id="GO:0003712">
    <property type="term" value="F:transcription coregulator activity"/>
    <property type="evidence" value="ECO:0000315"/>
    <property type="project" value="UniProtKB"/>
</dbReference>
<dbReference type="GO" id="GO:0048102">
    <property type="term" value="P:autophagic cell death"/>
    <property type="evidence" value="ECO:0000315"/>
    <property type="project" value="FlyBase"/>
</dbReference>
<dbReference type="GO" id="GO:0043068">
    <property type="term" value="P:positive regulation of programmed cell death"/>
    <property type="evidence" value="ECO:0000315"/>
    <property type="project" value="FlyBase"/>
</dbReference>
<dbReference type="GO" id="GO:0060261">
    <property type="term" value="P:positive regulation of transcription initiation by RNA polymerase II"/>
    <property type="evidence" value="ECO:0000318"/>
    <property type="project" value="GO_Central"/>
</dbReference>
<dbReference type="GO" id="GO:0035209">
    <property type="term" value="P:pupal development"/>
    <property type="evidence" value="ECO:0000315"/>
    <property type="project" value="FlyBase"/>
</dbReference>
<dbReference type="GO" id="GO:0043067">
    <property type="term" value="P:regulation of programmed cell death"/>
    <property type="evidence" value="ECO:0000315"/>
    <property type="project" value="FlyBase"/>
</dbReference>
<dbReference type="GO" id="GO:0006357">
    <property type="term" value="P:regulation of transcription by RNA polymerase II"/>
    <property type="evidence" value="ECO:0000315"/>
    <property type="project" value="UniProtKB"/>
</dbReference>
<dbReference type="GO" id="GO:0035075">
    <property type="term" value="P:response to ecdysone"/>
    <property type="evidence" value="ECO:0000316"/>
    <property type="project" value="FlyBase"/>
</dbReference>
<dbReference type="GO" id="GO:0035070">
    <property type="term" value="P:salivary gland histolysis"/>
    <property type="evidence" value="ECO:0000315"/>
    <property type="project" value="FlyBase"/>
</dbReference>
<dbReference type="InterPro" id="IPR021429">
    <property type="entry name" value="Mediator_Med24"/>
</dbReference>
<dbReference type="PANTHER" id="PTHR12898">
    <property type="entry name" value="MEDIATOR OF RNA POLYMERASE II TRANSCRIPTION SUBUNIT 24"/>
    <property type="match status" value="1"/>
</dbReference>
<dbReference type="PANTHER" id="PTHR12898:SF1">
    <property type="entry name" value="MEDIATOR OF RNA POLYMERASE II TRANSCRIPTION SUBUNIT 24"/>
    <property type="match status" value="1"/>
</dbReference>
<dbReference type="Pfam" id="PF11277">
    <property type="entry name" value="Med24_N"/>
    <property type="match status" value="1"/>
</dbReference>
<reference key="1">
    <citation type="submission" date="2000-07" db="EMBL/GenBank/DDBJ databases">
        <title>Transcriptional coactivators in Drosophila.</title>
        <authorList>
            <person name="Southworth J.W."/>
            <person name="Kennison J.A."/>
        </authorList>
    </citation>
    <scope>NUCLEOTIDE SEQUENCE [MRNA]</scope>
</reference>
<reference key="2">
    <citation type="journal article" date="2000" name="Science">
        <title>The genome sequence of Drosophila melanogaster.</title>
        <authorList>
            <person name="Adams M.D."/>
            <person name="Celniker S.E."/>
            <person name="Holt R.A."/>
            <person name="Evans C.A."/>
            <person name="Gocayne J.D."/>
            <person name="Amanatides P.G."/>
            <person name="Scherer S.E."/>
            <person name="Li P.W."/>
            <person name="Hoskins R.A."/>
            <person name="Galle R.F."/>
            <person name="George R.A."/>
            <person name="Lewis S.E."/>
            <person name="Richards S."/>
            <person name="Ashburner M."/>
            <person name="Henderson S.N."/>
            <person name="Sutton G.G."/>
            <person name="Wortman J.R."/>
            <person name="Yandell M.D."/>
            <person name="Zhang Q."/>
            <person name="Chen L.X."/>
            <person name="Brandon R.C."/>
            <person name="Rogers Y.-H.C."/>
            <person name="Blazej R.G."/>
            <person name="Champe M."/>
            <person name="Pfeiffer B.D."/>
            <person name="Wan K.H."/>
            <person name="Doyle C."/>
            <person name="Baxter E.G."/>
            <person name="Helt G."/>
            <person name="Nelson C.R."/>
            <person name="Miklos G.L.G."/>
            <person name="Abril J.F."/>
            <person name="Agbayani A."/>
            <person name="An H.-J."/>
            <person name="Andrews-Pfannkoch C."/>
            <person name="Baldwin D."/>
            <person name="Ballew R.M."/>
            <person name="Basu A."/>
            <person name="Baxendale J."/>
            <person name="Bayraktaroglu L."/>
            <person name="Beasley E.M."/>
            <person name="Beeson K.Y."/>
            <person name="Benos P.V."/>
            <person name="Berman B.P."/>
            <person name="Bhandari D."/>
            <person name="Bolshakov S."/>
            <person name="Borkova D."/>
            <person name="Botchan M.R."/>
            <person name="Bouck J."/>
            <person name="Brokstein P."/>
            <person name="Brottier P."/>
            <person name="Burtis K.C."/>
            <person name="Busam D.A."/>
            <person name="Butler H."/>
            <person name="Cadieu E."/>
            <person name="Center A."/>
            <person name="Chandra I."/>
            <person name="Cherry J.M."/>
            <person name="Cawley S."/>
            <person name="Dahlke C."/>
            <person name="Davenport L.B."/>
            <person name="Davies P."/>
            <person name="de Pablos B."/>
            <person name="Delcher A."/>
            <person name="Deng Z."/>
            <person name="Mays A.D."/>
            <person name="Dew I."/>
            <person name="Dietz S.M."/>
            <person name="Dodson K."/>
            <person name="Doup L.E."/>
            <person name="Downes M."/>
            <person name="Dugan-Rocha S."/>
            <person name="Dunkov B.C."/>
            <person name="Dunn P."/>
            <person name="Durbin K.J."/>
            <person name="Evangelista C.C."/>
            <person name="Ferraz C."/>
            <person name="Ferriera S."/>
            <person name="Fleischmann W."/>
            <person name="Fosler C."/>
            <person name="Gabrielian A.E."/>
            <person name="Garg N.S."/>
            <person name="Gelbart W.M."/>
            <person name="Glasser K."/>
            <person name="Glodek A."/>
            <person name="Gong F."/>
            <person name="Gorrell J.H."/>
            <person name="Gu Z."/>
            <person name="Guan P."/>
            <person name="Harris M."/>
            <person name="Harris N.L."/>
            <person name="Harvey D.A."/>
            <person name="Heiman T.J."/>
            <person name="Hernandez J.R."/>
            <person name="Houck J."/>
            <person name="Hostin D."/>
            <person name="Houston K.A."/>
            <person name="Howland T.J."/>
            <person name="Wei M.-H."/>
            <person name="Ibegwam C."/>
            <person name="Jalali M."/>
            <person name="Kalush F."/>
            <person name="Karpen G.H."/>
            <person name="Ke Z."/>
            <person name="Kennison J.A."/>
            <person name="Ketchum K.A."/>
            <person name="Kimmel B.E."/>
            <person name="Kodira C.D."/>
            <person name="Kraft C.L."/>
            <person name="Kravitz S."/>
            <person name="Kulp D."/>
            <person name="Lai Z."/>
            <person name="Lasko P."/>
            <person name="Lei Y."/>
            <person name="Levitsky A.A."/>
            <person name="Li J.H."/>
            <person name="Li Z."/>
            <person name="Liang Y."/>
            <person name="Lin X."/>
            <person name="Liu X."/>
            <person name="Mattei B."/>
            <person name="McIntosh T.C."/>
            <person name="McLeod M.P."/>
            <person name="McPherson D."/>
            <person name="Merkulov G."/>
            <person name="Milshina N.V."/>
            <person name="Mobarry C."/>
            <person name="Morris J."/>
            <person name="Moshrefi A."/>
            <person name="Mount S.M."/>
            <person name="Moy M."/>
            <person name="Murphy B."/>
            <person name="Murphy L."/>
            <person name="Muzny D.M."/>
            <person name="Nelson D.L."/>
            <person name="Nelson D.R."/>
            <person name="Nelson K.A."/>
            <person name="Nixon K."/>
            <person name="Nusskern D.R."/>
            <person name="Pacleb J.M."/>
            <person name="Palazzolo M."/>
            <person name="Pittman G.S."/>
            <person name="Pan S."/>
            <person name="Pollard J."/>
            <person name="Puri V."/>
            <person name="Reese M.G."/>
            <person name="Reinert K."/>
            <person name="Remington K."/>
            <person name="Saunders R.D.C."/>
            <person name="Scheeler F."/>
            <person name="Shen H."/>
            <person name="Shue B.C."/>
            <person name="Siden-Kiamos I."/>
            <person name="Simpson M."/>
            <person name="Skupski M.P."/>
            <person name="Smith T.J."/>
            <person name="Spier E."/>
            <person name="Spradling A.C."/>
            <person name="Stapleton M."/>
            <person name="Strong R."/>
            <person name="Sun E."/>
            <person name="Svirskas R."/>
            <person name="Tector C."/>
            <person name="Turner R."/>
            <person name="Venter E."/>
            <person name="Wang A.H."/>
            <person name="Wang X."/>
            <person name="Wang Z.-Y."/>
            <person name="Wassarman D.A."/>
            <person name="Weinstock G.M."/>
            <person name="Weissenbach J."/>
            <person name="Williams S.M."/>
            <person name="Woodage T."/>
            <person name="Worley K.C."/>
            <person name="Wu D."/>
            <person name="Yang S."/>
            <person name="Yao Q.A."/>
            <person name="Ye J."/>
            <person name="Yeh R.-F."/>
            <person name="Zaveri J.S."/>
            <person name="Zhan M."/>
            <person name="Zhang G."/>
            <person name="Zhao Q."/>
            <person name="Zheng L."/>
            <person name="Zheng X.H."/>
            <person name="Zhong F.N."/>
            <person name="Zhong W."/>
            <person name="Zhou X."/>
            <person name="Zhu S.C."/>
            <person name="Zhu X."/>
            <person name="Smith H.O."/>
            <person name="Gibbs R.A."/>
            <person name="Myers E.W."/>
            <person name="Rubin G.M."/>
            <person name="Venter J.C."/>
        </authorList>
    </citation>
    <scope>NUCLEOTIDE SEQUENCE [LARGE SCALE GENOMIC DNA]</scope>
    <source>
        <strain>Berkeley</strain>
    </source>
</reference>
<reference key="3">
    <citation type="journal article" date="2002" name="Genome Biol.">
        <title>Annotation of the Drosophila melanogaster euchromatic genome: a systematic review.</title>
        <authorList>
            <person name="Misra S."/>
            <person name="Crosby M.A."/>
            <person name="Mungall C.J."/>
            <person name="Matthews B.B."/>
            <person name="Campbell K.S."/>
            <person name="Hradecky P."/>
            <person name="Huang Y."/>
            <person name="Kaminker J.S."/>
            <person name="Millburn G.H."/>
            <person name="Prochnik S.E."/>
            <person name="Smith C.D."/>
            <person name="Tupy J.L."/>
            <person name="Whitfield E.J."/>
            <person name="Bayraktaroglu L."/>
            <person name="Berman B.P."/>
            <person name="Bettencourt B.R."/>
            <person name="Celniker S.E."/>
            <person name="de Grey A.D.N.J."/>
            <person name="Drysdale R.A."/>
            <person name="Harris N.L."/>
            <person name="Richter J."/>
            <person name="Russo S."/>
            <person name="Schroeder A.J."/>
            <person name="Shu S.Q."/>
            <person name="Stapleton M."/>
            <person name="Yamada C."/>
            <person name="Ashburner M."/>
            <person name="Gelbart W.M."/>
            <person name="Rubin G.M."/>
            <person name="Lewis S.E."/>
        </authorList>
    </citation>
    <scope>GENOME REANNOTATION</scope>
    <source>
        <strain>Berkeley</strain>
    </source>
</reference>
<reference key="4">
    <citation type="journal article" date="2002" name="Genome Biol.">
        <title>A Drosophila full-length cDNA resource.</title>
        <authorList>
            <person name="Stapleton M."/>
            <person name="Carlson J.W."/>
            <person name="Brokstein P."/>
            <person name="Yu C."/>
            <person name="Champe M."/>
            <person name="George R.A."/>
            <person name="Guarin H."/>
            <person name="Kronmiller B."/>
            <person name="Pacleb J.M."/>
            <person name="Park S."/>
            <person name="Wan K.H."/>
            <person name="Rubin G.M."/>
            <person name="Celniker S.E."/>
        </authorList>
    </citation>
    <scope>NUCLEOTIDE SEQUENCE [LARGE SCALE MRNA]</scope>
    <source>
        <strain>Berkeley</strain>
        <tissue>Embryo</tissue>
    </source>
</reference>
<reference key="5">
    <citation type="submission" date="2006-10" db="EMBL/GenBank/DDBJ databases">
        <authorList>
            <person name="Stapleton M."/>
            <person name="Carlson J.W."/>
            <person name="Frise E."/>
            <person name="Kapadia B."/>
            <person name="Park S."/>
            <person name="Wan K.H."/>
            <person name="Yu C."/>
            <person name="Celniker S.E."/>
        </authorList>
    </citation>
    <scope>NUCLEOTIDE SEQUENCE [LARGE SCALE MRNA]</scope>
    <source>
        <strain>Berkeley</strain>
        <tissue>Embryo</tissue>
    </source>
</reference>
<reference key="6">
    <citation type="journal article" date="2002" name="J. Biol. Chem.">
        <title>Novel Mediator proteins of the small Mediator complex in Drosophila SL2 cells.</title>
        <authorList>
            <person name="Gu J.-Y."/>
            <person name="Park J.M."/>
            <person name="Song E.J."/>
            <person name="Mizuguchi G."/>
            <person name="Yoon J.H."/>
            <person name="Kim-Ha J."/>
            <person name="Lee K.-J."/>
            <person name="Kim Y.-J."/>
        </authorList>
    </citation>
    <scope>IDENTIFICATION BY MASS SPECTROMETRY</scope>
    <scope>IDENTIFICATION IN THE MEDIATOR COMPLEX</scope>
    <scope>INTERACTION WITH MED6 AND MED17</scope>
</reference>
<reference key="7">
    <citation type="journal article" date="2006" name="Genes Dev.">
        <title>Coactivator cross-talk specifies transcriptional output.</title>
        <authorList>
            <person name="Marr M.T. II"/>
            <person name="Isogai Y."/>
            <person name="Wright K.J."/>
            <person name="Tjian R."/>
        </authorList>
    </citation>
    <scope>FUNCTION</scope>
</reference>
<reference key="8">
    <citation type="journal article" date="2008" name="J. Proteome Res.">
        <title>Phosphoproteome analysis of Drosophila melanogaster embryos.</title>
        <authorList>
            <person name="Zhai B."/>
            <person name="Villen J."/>
            <person name="Beausoleil S.A."/>
            <person name="Mintseris J."/>
            <person name="Gygi S.P."/>
        </authorList>
    </citation>
    <scope>PHOSPHORYLATION [LARGE SCALE ANALYSIS] AT SER-827 AND SER-829</scope>
    <scope>IDENTIFICATION BY MASS SPECTROMETRY</scope>
    <source>
        <tissue>Embryo</tissue>
    </source>
</reference>